<protein>
    <recommendedName>
        <fullName>1,2-dihydroxynaphthalene dioxygenase</fullName>
        <shortName>1,2-DHN dioxygenase</shortName>
        <shortName>DHNDO</shortName>
        <ecNumber>1.13.11.56</ecNumber>
    </recommendedName>
</protein>
<proteinExistence type="evidence at protein level"/>
<evidence type="ECO:0000250" key="1"/>
<evidence type="ECO:0000255" key="2">
    <source>
        <dbReference type="PROSITE-ProRule" id="PRU01163"/>
    </source>
</evidence>
<evidence type="ECO:0000269" key="3">
    <source>
    </source>
</evidence>
<evidence type="ECO:0000269" key="4">
    <source>
    </source>
</evidence>
<evidence type="ECO:0000305" key="5"/>
<reference key="1">
    <citation type="journal article" date="2006" name="Microbiology">
        <title>Identification and functional analysis of the genes for naphthalenesulfonate catabolism by Sphingomonas xenophaga BN6.</title>
        <authorList>
            <person name="Keck A."/>
            <person name="Conradt D."/>
            <person name="Mahler A."/>
            <person name="Stolz A."/>
            <person name="Mattes R."/>
            <person name="Klein J."/>
        </authorList>
    </citation>
    <scope>NUCLEOTIDE SEQUENCE [GENOMIC DNA]</scope>
    <scope>FUNCTION</scope>
    <scope>ACTIVITY REGULATION</scope>
    <source>
        <strain>DSM 6383 / KCTC 2978 / NBRC 107872 / BN6</strain>
    </source>
</reference>
<reference key="2">
    <citation type="journal article" date="1991" name="J. Bacteriol.">
        <title>Purification and characterization of a 1,2-dihydroxynaphthalene dioxygenase from a bacterium that degrades naphthalenesulfonic acids.</title>
        <authorList>
            <person name="Kuhm A.E."/>
            <person name="Stolz A."/>
            <person name="Ngai K.L."/>
            <person name="Knackmuss H.J."/>
        </authorList>
    </citation>
    <scope>PROTEIN SEQUENCE OF 2-30</scope>
    <scope>FUNCTION</scope>
    <scope>CATALYTIC ACTIVITY</scope>
    <scope>BIOPHYSICOCHEMICAL PROPERTIES</scope>
    <scope>SUBSTRATE SPECIFICITY</scope>
    <scope>COFACTOR</scope>
    <scope>INDUCTION</scope>
    <scope>SUBUNIT</scope>
</reference>
<name>NSAC_SPHXE</name>
<comment type="function">
    <text evidence="3 4">Involved in the naphthalene and naphthalenesulfonate catabolic pathway. Catalyzes the meta-cleavage of 1,2-dihydroxynaphthalene (1,2-DHN) to yield 2-hydroxychromene-2-carboxylic acid. Can also cleave 1,2,5-trihydroxynaphthalene (1,2,5-THN), 1,2,6-trihydroxynaphthalene (1,2,6-THN), 1,2,7-trihydroxynaphthalene (1,2,7-THN), 2,3-dihydroxybiphenyl, 3,4-dihydroxybiphenyl, catechol, 3-methylcatechol and 4-methylcatechol.</text>
</comment>
<comment type="catalytic activity">
    <reaction evidence="4">
        <text>naphthalene-1,2-diol + O2 = 2-hydroxychromene-2-carboxylate + H(+)</text>
        <dbReference type="Rhea" id="RHEA:27310"/>
        <dbReference type="ChEBI" id="CHEBI:15378"/>
        <dbReference type="ChEBI" id="CHEBI:15379"/>
        <dbReference type="ChEBI" id="CHEBI:17435"/>
        <dbReference type="ChEBI" id="CHEBI:59350"/>
        <dbReference type="EC" id="1.13.11.56"/>
    </reaction>
</comment>
<comment type="cofactor">
    <cofactor evidence="4">
        <name>Fe(2+)</name>
        <dbReference type="ChEBI" id="CHEBI:29033"/>
    </cofactor>
</comment>
<comment type="biophysicochemical properties">
    <kinetics>
        <KM evidence="4">34 uM for 1,2-DHN (at pH 5.5)</KM>
        <text>Under alkaline conditions (pH 11), the cleavage of 1,2-DHN yield cis-2'-hydroxybenzalpyruvate.</text>
    </kinetics>
</comment>
<comment type="pathway">
    <text>Aromatic compound metabolism; naphthalene degradation.</text>
</comment>
<comment type="subunit">
    <text evidence="4">Homooctamer.</text>
</comment>
<comment type="induction">
    <text evidence="4">By naphthalene-2-sulfonic acid.</text>
</comment>
<comment type="similarity">
    <text evidence="5">Belongs to the extradiol ring-cleavage dioxygenase family.</text>
</comment>
<feature type="initiator methionine" description="Removed" evidence="4">
    <location>
        <position position="1"/>
    </location>
</feature>
<feature type="chain" id="PRO_0000423055" description="1,2-dihydroxynaphthalene dioxygenase">
    <location>
        <begin position="2"/>
        <end position="298"/>
    </location>
</feature>
<feature type="domain" description="VOC 1" evidence="2">
    <location>
        <begin position="6"/>
        <end position="121"/>
    </location>
</feature>
<feature type="domain" description="VOC 2" evidence="2">
    <location>
        <begin position="146"/>
        <end position="267"/>
    </location>
</feature>
<feature type="binding site" evidence="1">
    <location>
        <position position="149"/>
    </location>
    <ligand>
        <name>Fe cation</name>
        <dbReference type="ChEBI" id="CHEBI:24875"/>
    </ligand>
</feature>
<feature type="binding site" evidence="1">
    <location>
        <position position="149"/>
    </location>
    <ligand>
        <name>substrate</name>
    </ligand>
</feature>
<feature type="binding site" evidence="1">
    <location>
        <begin position="196"/>
        <end position="197"/>
    </location>
    <ligand>
        <name>substrate</name>
    </ligand>
</feature>
<feature type="binding site" evidence="1">
    <location>
        <position position="212"/>
    </location>
    <ligand>
        <name>Fe cation</name>
        <dbReference type="ChEBI" id="CHEBI:24875"/>
    </ligand>
</feature>
<feature type="binding site" evidence="1">
    <location>
        <position position="212"/>
    </location>
    <ligand>
        <name>substrate</name>
    </ligand>
</feature>
<feature type="binding site" evidence="1">
    <location>
        <position position="253"/>
    </location>
    <ligand>
        <name>substrate</name>
    </ligand>
</feature>
<feature type="binding site" evidence="1">
    <location>
        <position position="263"/>
    </location>
    <ligand>
        <name>Fe cation</name>
        <dbReference type="ChEBI" id="CHEBI:24875"/>
    </ligand>
</feature>
<keyword id="KW-0058">Aromatic hydrocarbons catabolism</keyword>
<keyword id="KW-0223">Dioxygenase</keyword>
<keyword id="KW-0903">Direct protein sequencing</keyword>
<keyword id="KW-0408">Iron</keyword>
<keyword id="KW-0479">Metal-binding</keyword>
<keyword id="KW-0560">Oxidoreductase</keyword>
<keyword id="KW-0677">Repeat</keyword>
<gene>
    <name type="primary">nsaC</name>
</gene>
<sequence length="298" mass="33301">MSSVSELGYLGMSVTDLDAWRAYAAEVAGMEVVDEGESDRIYLRMDLWHHRIALIKGDTDDLAYMGWRLGDPTEFESMVEKLTNAGIAVTVASDAEARERRVLGLAKLTDPGGNPTEIFYGPQVDAHKPFHPGRPMFGKFVTGSEGIGHCILRQDDVEAAAAFYRLLGLRGSVEYQLHLPNGMVAMPYFMHCNERQHSVAFGLGPMEKRINHLMFEYTELDDLGLAHDIVRERQIDVALQLGKHANDLALTFYCANPSGWLWEFGWGARKAPAQQEFYTRDIFGHGNEAQGYGMDVPL</sequence>
<accession>P74836</accession>
<dbReference type="EC" id="1.13.11.56"/>
<dbReference type="EMBL" id="U65001">
    <property type="protein sequence ID" value="AAB06725.2"/>
    <property type="molecule type" value="Genomic_DNA"/>
</dbReference>
<dbReference type="SMR" id="P74836"/>
<dbReference type="KEGG" id="ag:AAB06725"/>
<dbReference type="BRENDA" id="1.13.11.56">
    <property type="organism ID" value="10830"/>
</dbReference>
<dbReference type="SABIO-RK" id="P74836"/>
<dbReference type="UniPathway" id="UPA00082"/>
<dbReference type="GO" id="GO:0018554">
    <property type="term" value="F:1,2-dihydroxynaphthalene dioxygenase activity"/>
    <property type="evidence" value="ECO:0007669"/>
    <property type="project" value="UniProtKB-EC"/>
</dbReference>
<dbReference type="GO" id="GO:0008198">
    <property type="term" value="F:ferrous iron binding"/>
    <property type="evidence" value="ECO:0007669"/>
    <property type="project" value="InterPro"/>
</dbReference>
<dbReference type="GO" id="GO:0016702">
    <property type="term" value="F:oxidoreductase activity, acting on single donors with incorporation of molecular oxygen, incorporation of two atoms of oxygen"/>
    <property type="evidence" value="ECO:0000314"/>
    <property type="project" value="UniProtKB"/>
</dbReference>
<dbReference type="GO" id="GO:1901170">
    <property type="term" value="P:naphthalene catabolic process"/>
    <property type="evidence" value="ECO:0000315"/>
    <property type="project" value="UniProtKB"/>
</dbReference>
<dbReference type="GO" id="GO:0042178">
    <property type="term" value="P:xenobiotic catabolic process"/>
    <property type="evidence" value="ECO:0007669"/>
    <property type="project" value="InterPro"/>
</dbReference>
<dbReference type="CDD" id="cd07237">
    <property type="entry name" value="BphC1-RGP6_C_like"/>
    <property type="match status" value="1"/>
</dbReference>
<dbReference type="CDD" id="cd07252">
    <property type="entry name" value="BphC1-RGP6_N_like"/>
    <property type="match status" value="1"/>
</dbReference>
<dbReference type="FunFam" id="3.10.180.10:FF:000027">
    <property type="entry name" value="1,2-dihydroxynaphthalene dioxygenase"/>
    <property type="match status" value="1"/>
</dbReference>
<dbReference type="Gene3D" id="3.10.180.10">
    <property type="entry name" value="2,3-Dihydroxybiphenyl 1,2-Dioxygenase, domain 1"/>
    <property type="match status" value="2"/>
</dbReference>
<dbReference type="InterPro" id="IPR017626">
    <property type="entry name" value="DiOHbiphenyl_dOase"/>
</dbReference>
<dbReference type="InterPro" id="IPR029068">
    <property type="entry name" value="Glyas_Bleomycin-R_OHBP_Dase"/>
</dbReference>
<dbReference type="InterPro" id="IPR004360">
    <property type="entry name" value="Glyas_Fos-R_dOase_dom"/>
</dbReference>
<dbReference type="InterPro" id="IPR037523">
    <property type="entry name" value="VOC"/>
</dbReference>
<dbReference type="InterPro" id="IPR000486">
    <property type="entry name" value="Xdiol_ring_cleave_dOase_1/2"/>
</dbReference>
<dbReference type="NCBIfam" id="TIGR03213">
    <property type="entry name" value="23dbph12diox"/>
    <property type="match status" value="1"/>
</dbReference>
<dbReference type="Pfam" id="PF22632">
    <property type="entry name" value="BphC_D1"/>
    <property type="match status" value="1"/>
</dbReference>
<dbReference type="Pfam" id="PF00903">
    <property type="entry name" value="Glyoxalase"/>
    <property type="match status" value="1"/>
</dbReference>
<dbReference type="SUPFAM" id="SSF54593">
    <property type="entry name" value="Glyoxalase/Bleomycin resistance protein/Dihydroxybiphenyl dioxygenase"/>
    <property type="match status" value="1"/>
</dbReference>
<dbReference type="PROSITE" id="PS00082">
    <property type="entry name" value="EXTRADIOL_DIOXYGENAS"/>
    <property type="match status" value="1"/>
</dbReference>
<dbReference type="PROSITE" id="PS51819">
    <property type="entry name" value="VOC"/>
    <property type="match status" value="2"/>
</dbReference>
<organism>
    <name type="scientific">Sphingobium xenophagum</name>
    <dbReference type="NCBI Taxonomy" id="121428"/>
    <lineage>
        <taxon>Bacteria</taxon>
        <taxon>Pseudomonadati</taxon>
        <taxon>Pseudomonadota</taxon>
        <taxon>Alphaproteobacteria</taxon>
        <taxon>Sphingomonadales</taxon>
        <taxon>Sphingomonadaceae</taxon>
        <taxon>Sphingobium</taxon>
    </lineage>
</organism>